<accession>B8G5D6</accession>
<sequence>MQPHLFTPLTIGSVTLRNRIGMSPMCQYSAVDGFPTDWHLMHLGARAAGGVGLIILEATAVSPEGRISPFDLGIWSDDHIAALSRIVKLIESLGAVAGIQLAHAGRKASVGRPWEGGKPIAPANGGWPVVGPTAEPFAPGYPTPIPLDAAGIARVVADFATATKRARAAGFRWIEIHAAHGYLLHNFLSPLGNDRNDEYGGDLRGRVRLLSEVTAAVRAEWPSDLPLAVRLSCSDWTPEGLTIADTVEVARMLREQGVDLIDCSSGGIAPGITIPVGEGYQVPFAAQVRREANIATAAVGLITRPEHADAIVRNGDADLVLLGRELLRDPHWPLRAARALGHDLAPPPQYLRAW</sequence>
<feature type="chain" id="PRO_0000458662" description="NADPH dehydrogenase">
    <location>
        <begin position="1"/>
        <end position="354"/>
    </location>
</feature>
<feature type="active site" description="Proton donor" evidence="4">
    <location>
        <position position="182"/>
    </location>
</feature>
<feature type="binding site" evidence="1 6">
    <location>
        <position position="23"/>
    </location>
    <ligand>
        <name>FMN</name>
        <dbReference type="ChEBI" id="CHEBI:58210"/>
    </ligand>
</feature>
<feature type="binding site" evidence="1 6">
    <location>
        <position position="24"/>
    </location>
    <ligand>
        <name>FMN</name>
        <dbReference type="ChEBI" id="CHEBI:58210"/>
    </ligand>
</feature>
<feature type="binding site" evidence="1 6">
    <location>
        <position position="26"/>
    </location>
    <ligand>
        <name>FMN</name>
        <dbReference type="ChEBI" id="CHEBI:58210"/>
    </ligand>
</feature>
<feature type="binding site" evidence="1 6">
    <location>
        <position position="58"/>
    </location>
    <ligand>
        <name>FMN</name>
        <dbReference type="ChEBI" id="CHEBI:58210"/>
    </ligand>
</feature>
<feature type="binding site" evidence="1 6">
    <location>
        <position position="100"/>
    </location>
    <ligand>
        <name>FMN</name>
        <dbReference type="ChEBI" id="CHEBI:58210"/>
    </ligand>
</feature>
<feature type="binding site" evidence="1 6">
    <location>
        <position position="230"/>
    </location>
    <ligand>
        <name>FMN</name>
        <dbReference type="ChEBI" id="CHEBI:58210"/>
    </ligand>
</feature>
<feature type="binding site" evidence="1 6">
    <location>
        <position position="301"/>
    </location>
    <ligand>
        <name>FMN</name>
        <dbReference type="ChEBI" id="CHEBI:58210"/>
    </ligand>
</feature>
<feature type="binding site" evidence="1 6">
    <location>
        <position position="323"/>
    </location>
    <ligand>
        <name>FMN</name>
        <dbReference type="ChEBI" id="CHEBI:58210"/>
    </ligand>
</feature>
<feature type="binding site" evidence="1 6">
    <location>
        <position position="324"/>
    </location>
    <ligand>
        <name>FMN</name>
        <dbReference type="ChEBI" id="CHEBI:58210"/>
    </ligand>
</feature>
<feature type="strand" evidence="7">
    <location>
        <begin position="9"/>
        <end position="11"/>
    </location>
</feature>
<feature type="strand" evidence="7">
    <location>
        <begin position="14"/>
        <end position="22"/>
    </location>
</feature>
<feature type="strand" evidence="7">
    <location>
        <begin position="31"/>
        <end position="33"/>
    </location>
</feature>
<feature type="helix" evidence="7">
    <location>
        <begin position="37"/>
        <end position="49"/>
    </location>
</feature>
<feature type="strand" evidence="7">
    <location>
        <begin position="52"/>
        <end position="62"/>
    </location>
</feature>
<feature type="helix" evidence="7">
    <location>
        <begin position="63"/>
        <end position="65"/>
    </location>
</feature>
<feature type="helix" evidence="7">
    <location>
        <begin position="77"/>
        <end position="79"/>
    </location>
</feature>
<feature type="helix" evidence="7">
    <location>
        <begin position="80"/>
        <end position="92"/>
    </location>
</feature>
<feature type="strand" evidence="7">
    <location>
        <begin position="96"/>
        <end position="102"/>
    </location>
</feature>
<feature type="helix" evidence="7">
    <location>
        <begin position="105"/>
        <end position="107"/>
    </location>
</feature>
<feature type="helix" evidence="7">
    <location>
        <begin position="113"/>
        <end position="115"/>
    </location>
</feature>
<feature type="helix" evidence="7">
    <location>
        <begin position="122"/>
        <end position="124"/>
    </location>
</feature>
<feature type="strand" evidence="7">
    <location>
        <begin position="130"/>
        <end position="134"/>
    </location>
</feature>
<feature type="helix" evidence="7">
    <location>
        <begin position="149"/>
        <end position="169"/>
    </location>
</feature>
<feature type="strand" evidence="7">
    <location>
        <begin position="172"/>
        <end position="178"/>
    </location>
</feature>
<feature type="helix" evidence="7">
    <location>
        <begin position="183"/>
        <end position="188"/>
    </location>
</feature>
<feature type="turn" evidence="7">
    <location>
        <begin position="190"/>
        <end position="192"/>
    </location>
</feature>
<feature type="strand" evidence="7">
    <location>
        <begin position="200"/>
        <end position="202"/>
    </location>
</feature>
<feature type="helix" evidence="7">
    <location>
        <begin position="203"/>
        <end position="206"/>
    </location>
</feature>
<feature type="helix" evidence="7">
    <location>
        <begin position="208"/>
        <end position="220"/>
    </location>
</feature>
<feature type="strand" evidence="7">
    <location>
        <begin position="227"/>
        <end position="232"/>
    </location>
</feature>
<feature type="helix" evidence="7">
    <location>
        <begin position="243"/>
        <end position="255"/>
    </location>
</feature>
<feature type="strand" evidence="7">
    <location>
        <begin position="260"/>
        <end position="264"/>
    </location>
</feature>
<feature type="turn" evidence="7">
    <location>
        <begin position="278"/>
        <end position="281"/>
    </location>
</feature>
<feature type="helix" evidence="7">
    <location>
        <begin position="282"/>
        <end position="291"/>
    </location>
</feature>
<feature type="strand" evidence="7">
    <location>
        <begin position="295"/>
        <end position="298"/>
    </location>
</feature>
<feature type="helix" evidence="7">
    <location>
        <begin position="305"/>
        <end position="313"/>
    </location>
</feature>
<feature type="strand" evidence="7">
    <location>
        <begin position="318"/>
        <end position="323"/>
    </location>
</feature>
<feature type="helix" evidence="7">
    <location>
        <begin position="324"/>
        <end position="328"/>
    </location>
</feature>
<feature type="helix" evidence="7">
    <location>
        <begin position="332"/>
        <end position="340"/>
    </location>
</feature>
<feature type="helix" evidence="7">
    <location>
        <begin position="348"/>
        <end position="353"/>
    </location>
</feature>
<gene>
    <name evidence="5" type="ordered locus">Cagg_2779</name>
</gene>
<keyword id="KW-0002">3D-structure</keyword>
<keyword id="KW-0285">Flavoprotein</keyword>
<keyword id="KW-0288">FMN</keyword>
<keyword id="KW-0521">NADP</keyword>
<keyword id="KW-0560">Oxidoreductase</keyword>
<comment type="function">
    <text evidence="1">Ene-reductase that catalyzes the stereoselective reduction of activated C-C double bonds (PubMed:33925162). Shows very good activity with 4-ketoisophorone, 2-cyclohexen-1-one and 1-octen-3-one, and low activity with maleimide, 2-methyl-pentenal, 2-methyl-cyclohexen-1-one, 2-cyclopenten-1-one and trans-2-hexen-1-al (PubMed:33925162). Shows the highest catalytic efficiency with ketoisophorone (PubMed:33925162). Exhibits a restricted substrate spectrum with generally lower activities compared to other ene-reductases (PubMed:33925162).</text>
</comment>
<comment type="catalytic activity">
    <reaction evidence="1">
        <text>A + NADPH + H(+) = AH2 + NADP(+)</text>
        <dbReference type="Rhea" id="RHEA:13149"/>
        <dbReference type="ChEBI" id="CHEBI:13193"/>
        <dbReference type="ChEBI" id="CHEBI:15378"/>
        <dbReference type="ChEBI" id="CHEBI:17499"/>
        <dbReference type="ChEBI" id="CHEBI:57783"/>
        <dbReference type="ChEBI" id="CHEBI:58349"/>
        <dbReference type="EC" id="1.6.99.1"/>
    </reaction>
</comment>
<comment type="cofactor">
    <cofactor evidence="1">
        <name>FMN</name>
        <dbReference type="ChEBI" id="CHEBI:58210"/>
    </cofactor>
</comment>
<comment type="biophysicochemical properties">
    <kinetics>
        <KM evidence="1">0.013 mM for 4-ketoisophorone</KM>
        <KM evidence="1">5.52 mM for 2-cyclohexen-1-one</KM>
        <KM evidence="1">10.32 mM for 1-octen-3-one</KM>
        <text evidence="1">kcat is 2.27 sec(-1) with 4-ketoisophorone as substrate. kcat is 3.82 sec(-1) with 2-cyclohexen-1-one as substrate. kcat is 12.13 sec(-1) with 1-octen-3-one as substrate.</text>
    </kinetics>
    <phDependence>
        <text evidence="1">Optimum pH is 6.0-9.0.</text>
    </phDependence>
    <temperatureDependence>
        <text evidence="1">Highly thermoresistant.</text>
    </temperatureDependence>
</comment>
<comment type="subunit">
    <text evidence="1">Homodimer (PubMed:33925162). Behaves as an active monomer in solution while in the crystal packing assembles following the classical dimeric architecture of other thermophilic-like ene-reductases (PubMed:33925162).</text>
</comment>
<comment type="miscellaneous">
    <text evidence="1">Is a robust biocatalyst showing high thermostability, good solvent tolerance and a wide range of pH optimum.</text>
</comment>
<comment type="similarity">
    <text evidence="3">Belongs to the NADH:flavin oxidoreductase/NADH oxidase family. NamA subfamily.</text>
</comment>
<dbReference type="EC" id="1.6.99.1" evidence="1"/>
<dbReference type="EMBL" id="CP001337">
    <property type="protein sequence ID" value="ACL25642.1"/>
    <property type="molecule type" value="Genomic_DNA"/>
</dbReference>
<dbReference type="RefSeq" id="WP_015941499.1">
    <property type="nucleotide sequence ID" value="NC_011831.1"/>
</dbReference>
<dbReference type="PDB" id="7O0T">
    <property type="method" value="X-ray"/>
    <property type="resolution" value="2.40 A"/>
    <property type="chains" value="A/B/C/D=1-354"/>
</dbReference>
<dbReference type="PDBsum" id="7O0T"/>
<dbReference type="SMR" id="B8G5D6"/>
<dbReference type="STRING" id="326427.Cagg_2779"/>
<dbReference type="KEGG" id="cag:Cagg_2779"/>
<dbReference type="eggNOG" id="COG1902">
    <property type="taxonomic scope" value="Bacteria"/>
</dbReference>
<dbReference type="HOGENOM" id="CLU_012153_2_0_0"/>
<dbReference type="OrthoDB" id="9772736at2"/>
<dbReference type="Proteomes" id="UP000002508">
    <property type="component" value="Chromosome"/>
</dbReference>
<dbReference type="GO" id="GO:0010181">
    <property type="term" value="F:FMN binding"/>
    <property type="evidence" value="ECO:0007669"/>
    <property type="project" value="InterPro"/>
</dbReference>
<dbReference type="GO" id="GO:0050661">
    <property type="term" value="F:NADP binding"/>
    <property type="evidence" value="ECO:0007669"/>
    <property type="project" value="InterPro"/>
</dbReference>
<dbReference type="GO" id="GO:0003959">
    <property type="term" value="F:NADPH dehydrogenase activity"/>
    <property type="evidence" value="ECO:0007669"/>
    <property type="project" value="InterPro"/>
</dbReference>
<dbReference type="CDD" id="cd02932">
    <property type="entry name" value="OYE_YqiM_FMN"/>
    <property type="match status" value="1"/>
</dbReference>
<dbReference type="Gene3D" id="3.20.20.70">
    <property type="entry name" value="Aldolase class I"/>
    <property type="match status" value="1"/>
</dbReference>
<dbReference type="InterPro" id="IPR013785">
    <property type="entry name" value="Aldolase_TIM"/>
</dbReference>
<dbReference type="InterPro" id="IPR001155">
    <property type="entry name" value="OxRdtase_FMN_N"/>
</dbReference>
<dbReference type="InterPro" id="IPR044152">
    <property type="entry name" value="YqjM-like"/>
</dbReference>
<dbReference type="PANTHER" id="PTHR43303">
    <property type="entry name" value="NADPH DEHYDROGENASE C23G7.10C-RELATED"/>
    <property type="match status" value="1"/>
</dbReference>
<dbReference type="PANTHER" id="PTHR43303:SF4">
    <property type="entry name" value="NADPH DEHYDROGENASE C23G7.10C-RELATED"/>
    <property type="match status" value="1"/>
</dbReference>
<dbReference type="Pfam" id="PF00724">
    <property type="entry name" value="Oxidored_FMN"/>
    <property type="match status" value="1"/>
</dbReference>
<dbReference type="SUPFAM" id="SSF51395">
    <property type="entry name" value="FMN-linked oxidoreductases"/>
    <property type="match status" value="1"/>
</dbReference>
<protein>
    <recommendedName>
        <fullName evidence="3">NADPH dehydrogenase</fullName>
        <ecNumber evidence="1">1.6.99.1</ecNumber>
    </recommendedName>
    <alternativeName>
        <fullName evidence="2">CaOYE</fullName>
    </alternativeName>
</protein>
<evidence type="ECO:0000269" key="1">
    <source>
    </source>
</evidence>
<evidence type="ECO:0000303" key="2">
    <source>
    </source>
</evidence>
<evidence type="ECO:0000305" key="3"/>
<evidence type="ECO:0000305" key="4">
    <source>
    </source>
</evidence>
<evidence type="ECO:0000312" key="5">
    <source>
        <dbReference type="EMBL" id="ACL25642.1"/>
    </source>
</evidence>
<evidence type="ECO:0007744" key="6">
    <source>
        <dbReference type="PDB" id="7O0T"/>
    </source>
</evidence>
<evidence type="ECO:0007829" key="7">
    <source>
        <dbReference type="PDB" id="7O0T"/>
    </source>
</evidence>
<proteinExistence type="evidence at protein level"/>
<reference key="1">
    <citation type="submission" date="2008-12" db="EMBL/GenBank/DDBJ databases">
        <title>Complete sequence of Chloroflexus aggregans DSM 9485.</title>
        <authorList>
            <consortium name="US DOE Joint Genome Institute"/>
            <person name="Lucas S."/>
            <person name="Copeland A."/>
            <person name="Lapidus A."/>
            <person name="Glavina del Rio T."/>
            <person name="Dalin E."/>
            <person name="Tice H."/>
            <person name="Pitluck S."/>
            <person name="Foster B."/>
            <person name="Larimer F."/>
            <person name="Land M."/>
            <person name="Hauser L."/>
            <person name="Kyrpides N."/>
            <person name="Mikhailova N."/>
            <person name="Bryant D.A."/>
            <person name="Richardson P."/>
        </authorList>
    </citation>
    <scope>NUCLEOTIDE SEQUENCE [LARGE SCALE GENOMIC DNA]</scope>
    <source>
        <strain>MD-66 / DSM 9485</strain>
    </source>
</reference>
<reference evidence="6" key="2">
    <citation type="journal article" date="2021" name="Microorganisms">
        <title>A new thermophilic ene-reductase from the filamentous anoxygenic phototrophic bacterium Chloroflexus aggregans.</title>
        <authorList>
            <person name="Robescu M.S."/>
            <person name="Niero M."/>
            <person name="Loprete G."/>
            <person name="Cendron L."/>
            <person name="Bergantino E."/>
        </authorList>
    </citation>
    <scope>X-RAY CRYSTALLOGRAPHY (2.40 ANGSTROMS) IN COMPLEX WITH FMN</scope>
    <scope>FUNCTION</scope>
    <scope>CATALYTIC ACTIVITY</scope>
    <scope>COFACTOR</scope>
    <scope>BIOPHYSICOCHEMICAL PROPERTIES</scope>
    <scope>SUBUNIT</scope>
    <scope>ACTIVE SITE</scope>
    <source>
        <strain>MD-66 / DSM 9485</strain>
    </source>
</reference>
<name>CAOYE_CHLAD</name>
<organism>
    <name type="scientific">Chloroflexus aggregans (strain MD-66 / DSM 9485)</name>
    <dbReference type="NCBI Taxonomy" id="326427"/>
    <lineage>
        <taxon>Bacteria</taxon>
        <taxon>Bacillati</taxon>
        <taxon>Chloroflexota</taxon>
        <taxon>Chloroflexia</taxon>
        <taxon>Chloroflexales</taxon>
        <taxon>Chloroflexineae</taxon>
        <taxon>Chloroflexaceae</taxon>
        <taxon>Chloroflexus</taxon>
    </lineage>
</organism>